<accession>P14235</accession>
<feature type="chain" id="PRO_0000088903" description="Actin">
    <location>
        <begin position="1"/>
        <end position="376"/>
    </location>
</feature>
<name>ACT_CANAX</name>
<evidence type="ECO:0000250" key="1">
    <source>
        <dbReference type="UniProtKB" id="P60010"/>
    </source>
</evidence>
<evidence type="ECO:0000305" key="2"/>
<keyword id="KW-0067">ATP-binding</keyword>
<keyword id="KW-0963">Cytoplasm</keyword>
<keyword id="KW-0206">Cytoskeleton</keyword>
<keyword id="KW-0378">Hydrolase</keyword>
<keyword id="KW-0547">Nucleotide-binding</keyword>
<proteinExistence type="inferred from homology"/>
<protein>
    <recommendedName>
        <fullName>Actin</fullName>
        <ecNumber evidence="1">3.6.4.-</ecNumber>
    </recommendedName>
</protein>
<comment type="function">
    <text>Actins are highly conserved proteins that are involved in various types of cell motility and are ubiquitously expressed in all eukaryotic cells.</text>
</comment>
<comment type="catalytic activity">
    <reaction evidence="1">
        <text>ATP + H2O = ADP + phosphate + H(+)</text>
        <dbReference type="Rhea" id="RHEA:13065"/>
        <dbReference type="ChEBI" id="CHEBI:15377"/>
        <dbReference type="ChEBI" id="CHEBI:15378"/>
        <dbReference type="ChEBI" id="CHEBI:30616"/>
        <dbReference type="ChEBI" id="CHEBI:43474"/>
        <dbReference type="ChEBI" id="CHEBI:456216"/>
    </reaction>
</comment>
<comment type="subcellular location">
    <subcellularLocation>
        <location>Cytoplasm</location>
        <location>Cytoskeleton</location>
    </subcellularLocation>
</comment>
<comment type="similarity">
    <text evidence="2">Belongs to the actin family.</text>
</comment>
<dbReference type="EC" id="3.6.4.-" evidence="1"/>
<dbReference type="EMBL" id="X16377">
    <property type="protein sequence ID" value="CAA34413.1"/>
    <property type="molecule type" value="Genomic_DNA"/>
</dbReference>
<dbReference type="PIR" id="S07639">
    <property type="entry name" value="S07639"/>
</dbReference>
<dbReference type="SMR" id="P14235"/>
<dbReference type="VEuPathDB" id="FungiDB:C1_13700W_A"/>
<dbReference type="VEuPathDB" id="FungiDB:CAWG_00082"/>
<dbReference type="GO" id="GO:0005737">
    <property type="term" value="C:cytoplasm"/>
    <property type="evidence" value="ECO:0007669"/>
    <property type="project" value="UniProtKB-KW"/>
</dbReference>
<dbReference type="GO" id="GO:0005856">
    <property type="term" value="C:cytoskeleton"/>
    <property type="evidence" value="ECO:0007669"/>
    <property type="project" value="UniProtKB-SubCell"/>
</dbReference>
<dbReference type="GO" id="GO:0005524">
    <property type="term" value="F:ATP binding"/>
    <property type="evidence" value="ECO:0007669"/>
    <property type="project" value="UniProtKB-KW"/>
</dbReference>
<dbReference type="GO" id="GO:0016787">
    <property type="term" value="F:hydrolase activity"/>
    <property type="evidence" value="ECO:0007669"/>
    <property type="project" value="UniProtKB-KW"/>
</dbReference>
<dbReference type="CDD" id="cd10224">
    <property type="entry name" value="ASKHA_NBD_actin"/>
    <property type="match status" value="1"/>
</dbReference>
<dbReference type="FunFam" id="3.30.420.40:FF:000291">
    <property type="entry name" value="Actin, alpha skeletal muscle"/>
    <property type="match status" value="1"/>
</dbReference>
<dbReference type="FunFam" id="3.90.640.10:FF:000001">
    <property type="entry name" value="Actin, muscle"/>
    <property type="match status" value="1"/>
</dbReference>
<dbReference type="FunFam" id="3.30.420.40:FF:000404">
    <property type="entry name" value="Major actin"/>
    <property type="match status" value="1"/>
</dbReference>
<dbReference type="FunFam" id="3.30.420.40:FF:000058">
    <property type="entry name" value="Putative actin-related protein 5"/>
    <property type="match status" value="1"/>
</dbReference>
<dbReference type="Gene3D" id="3.30.420.40">
    <property type="match status" value="2"/>
</dbReference>
<dbReference type="Gene3D" id="3.90.640.10">
    <property type="entry name" value="Actin, Chain A, domain 4"/>
    <property type="match status" value="1"/>
</dbReference>
<dbReference type="InterPro" id="IPR004000">
    <property type="entry name" value="Actin"/>
</dbReference>
<dbReference type="InterPro" id="IPR020902">
    <property type="entry name" value="Actin/actin-like_CS"/>
</dbReference>
<dbReference type="InterPro" id="IPR004001">
    <property type="entry name" value="Actin_CS"/>
</dbReference>
<dbReference type="InterPro" id="IPR043129">
    <property type="entry name" value="ATPase_NBD"/>
</dbReference>
<dbReference type="PANTHER" id="PTHR11937">
    <property type="entry name" value="ACTIN"/>
    <property type="match status" value="1"/>
</dbReference>
<dbReference type="Pfam" id="PF00022">
    <property type="entry name" value="Actin"/>
    <property type="match status" value="1"/>
</dbReference>
<dbReference type="PRINTS" id="PR00190">
    <property type="entry name" value="ACTIN"/>
</dbReference>
<dbReference type="SMART" id="SM00268">
    <property type="entry name" value="ACTIN"/>
    <property type="match status" value="1"/>
</dbReference>
<dbReference type="SUPFAM" id="SSF53067">
    <property type="entry name" value="Actin-like ATPase domain"/>
    <property type="match status" value="2"/>
</dbReference>
<dbReference type="PROSITE" id="PS00406">
    <property type="entry name" value="ACTINS_1"/>
    <property type="match status" value="1"/>
</dbReference>
<dbReference type="PROSITE" id="PS00432">
    <property type="entry name" value="ACTINS_2"/>
    <property type="match status" value="1"/>
</dbReference>
<dbReference type="PROSITE" id="PS01132">
    <property type="entry name" value="ACTINS_ACT_LIKE"/>
    <property type="match status" value="1"/>
</dbReference>
<reference key="1">
    <citation type="journal article" date="1989" name="Nucleic Acids Res.">
        <title>Sequence of the Candida albicans gene encoding actin.</title>
        <authorList>
            <person name="Losberger C."/>
            <person name="Ernst J.P."/>
        </authorList>
    </citation>
    <scope>NUCLEOTIDE SEQUENCE [GENOMIC DNA]</scope>
    <source>
        <strain>ATCC 10123</strain>
    </source>
</reference>
<sequence length="376" mass="41753">MDGEEVAALIIDNGSGMCKAGFAGDDAPRAVFPSLVGRPRHQGIMVGMGQKDSYVGDEAQSKRGILTLRYPIEHGIVSNWDDMEKIWHHTFYNELRVAPEEHPVLLTEAPMNPKSNREKMTQIMFETFNVPAFYVSIQAVLSLYSSGRTTGIVLDSGDGVTHVVPIYAGFSLPHGILRIDLAGRDLTNHLSKILSERGYSFTTSAEREIVRDIKERLCYVALDFEQEMQTSSQSSAIEKSYELPDGQVITIGNERFRAPEALFRPADLGLEAAGIDQTTFNSIMKCDMDVRKELYGNIVMSGGTTMFPGIAERMQKEITALAPSSMKVKIIAPPERKYSVWIGGSILASLSTFQQMWISKQEYDESGPSIVHHKCF</sequence>
<organism>
    <name type="scientific">Candida albicans</name>
    <name type="common">Yeast</name>
    <dbReference type="NCBI Taxonomy" id="5476"/>
    <lineage>
        <taxon>Eukaryota</taxon>
        <taxon>Fungi</taxon>
        <taxon>Dikarya</taxon>
        <taxon>Ascomycota</taxon>
        <taxon>Saccharomycotina</taxon>
        <taxon>Pichiomycetes</taxon>
        <taxon>Debaryomycetaceae</taxon>
        <taxon>Candida/Lodderomyces clade</taxon>
        <taxon>Candida</taxon>
    </lineage>
</organism>
<gene>
    <name type="primary">ACT1</name>
</gene>